<evidence type="ECO:0000255" key="1"/>
<evidence type="ECO:0000255" key="2">
    <source>
        <dbReference type="HAMAP-Rule" id="MF_04136"/>
    </source>
</evidence>
<comment type="function">
    <text evidence="2">Signal-arrest-release (SAR) endolysin with lysozyme activity that degrades host peptidoglycans and participates with the pinholin and spanin proteins in the sequential events which lead to programmed host cell lysis releasing the mature viral particles. Once the pinholin has permeabilized the host cell membrane, the SAR-endolysin is released into the periplasm where it breaks down the peptidoglycan layer.</text>
</comment>
<comment type="catalytic activity">
    <reaction evidence="2">
        <text>Hydrolysis of (1-&gt;4)-beta-linkages between N-acetylmuramic acid and N-acetyl-D-glucosamine residues in a peptidoglycan and between N-acetyl-D-glucosamine residues in chitodextrins.</text>
        <dbReference type="EC" id="3.2.1.17"/>
    </reaction>
</comment>
<comment type="subcellular location">
    <subcellularLocation>
        <location evidence="2">Host cell inner membrane</location>
        <topology evidence="2">Single-pass type II membrane protein</topology>
        <orientation evidence="2">Periplasmic side</orientation>
    </subcellularLocation>
    <text evidence="2">Secreted as a signal-anchored, membrane-tethered, inactive endolysin which is subsequently refolded, activated and released by membrane depolarization driven by the pinholin.</text>
</comment>
<comment type="domain">
    <text evidence="2">The signal-anchor, which may also be an uncleaved signal sequence tethers the SAR-endolysin to the membrane until the latter is depolarized by the holin, resulting in the escape of SAR-endolysin from the membrane.</text>
</comment>
<comment type="similarity">
    <text evidence="2">Belongs to the glycosyl hydrolase 24 family.</text>
</comment>
<sequence>MSRKLRYGLSAAVLALIAAGASAPEILDQFLDEKEGNHTTAYRDGAGIWTICRGATRVDGKPVIPGMKLSKEKCDRVNAIERDKALAWVEKNIKVPLTEPQKAGIASFCPYNIGPGKCFPSTFYRRINAGDRKGACEAIRWWIKDGGRDCRIRSNNCYGQVSRRDQESALACWGIDR</sequence>
<protein>
    <recommendedName>
        <fullName evidence="2">SAR-endolysin</fullName>
        <ecNumber evidence="2">3.2.1.17</ecNumber>
    </recommendedName>
    <alternativeName>
        <fullName evidence="2">Endolysin</fullName>
    </alternativeName>
    <alternativeName>
        <fullName evidence="2">Lysis protein</fullName>
    </alternativeName>
    <alternativeName>
        <fullName evidence="2">Lysozyme</fullName>
    </alternativeName>
    <alternativeName>
        <fullName evidence="2">Muramidase</fullName>
    </alternativeName>
</protein>
<organism>
    <name type="scientific">Escherichia phage 933W</name>
    <name type="common">Bacteriophage 933W</name>
    <dbReference type="NCBI Taxonomy" id="10730"/>
    <lineage>
        <taxon>Viruses</taxon>
        <taxon>Duplodnaviria</taxon>
        <taxon>Heunggongvirae</taxon>
        <taxon>Uroviricota</taxon>
        <taxon>Caudoviricetes</taxon>
        <taxon>Sepvirinae</taxon>
        <taxon>Traversvirus</taxon>
        <taxon>Traversvirus tv933W</taxon>
    </lineage>
</organism>
<feature type="chain" id="PRO_0000218089" description="SAR-endolysin">
    <location>
        <begin position="1"/>
        <end position="177"/>
    </location>
</feature>
<feature type="transmembrane region" description="Helical; Signal-anchor for type II membrane protein" evidence="1">
    <location>
        <begin position="1"/>
        <end position="23"/>
    </location>
</feature>
<feature type="active site" description="Proton donor/acceptor" evidence="2">
    <location>
        <position position="35"/>
    </location>
</feature>
<feature type="active site" description="Proton donor/acceptor" evidence="2">
    <location>
        <position position="44"/>
    </location>
</feature>
<dbReference type="EC" id="3.2.1.17" evidence="2"/>
<dbReference type="EMBL" id="AF125520">
    <property type="protein sequence ID" value="AAD25450.1"/>
    <property type="molecule type" value="Genomic_DNA"/>
</dbReference>
<dbReference type="RefSeq" id="NP_049505.1">
    <property type="nucleotide sequence ID" value="NC_000924.1"/>
</dbReference>
<dbReference type="SMR" id="P68920"/>
<dbReference type="CAZy" id="GH24">
    <property type="family name" value="Glycoside Hydrolase Family 24"/>
</dbReference>
<dbReference type="GeneID" id="1261939"/>
<dbReference type="KEGG" id="vg:1261939"/>
<dbReference type="OrthoDB" id="18172at10239"/>
<dbReference type="Proteomes" id="UP000002135">
    <property type="component" value="Genome"/>
</dbReference>
<dbReference type="GO" id="GO:0020002">
    <property type="term" value="C:host cell plasma membrane"/>
    <property type="evidence" value="ECO:0007669"/>
    <property type="project" value="UniProtKB-SubCell"/>
</dbReference>
<dbReference type="GO" id="GO:0016020">
    <property type="term" value="C:membrane"/>
    <property type="evidence" value="ECO:0007669"/>
    <property type="project" value="UniProtKB-KW"/>
</dbReference>
<dbReference type="GO" id="GO:0003796">
    <property type="term" value="F:lysozyme activity"/>
    <property type="evidence" value="ECO:0007669"/>
    <property type="project" value="UniProtKB-EC"/>
</dbReference>
<dbReference type="GO" id="GO:0016998">
    <property type="term" value="P:cell wall macromolecule catabolic process"/>
    <property type="evidence" value="ECO:0007669"/>
    <property type="project" value="InterPro"/>
</dbReference>
<dbReference type="GO" id="GO:0042742">
    <property type="term" value="P:defense response to bacterium"/>
    <property type="evidence" value="ECO:0007669"/>
    <property type="project" value="UniProtKB-KW"/>
</dbReference>
<dbReference type="GO" id="GO:0031640">
    <property type="term" value="P:killing of cells of another organism"/>
    <property type="evidence" value="ECO:0007669"/>
    <property type="project" value="UniProtKB-KW"/>
</dbReference>
<dbReference type="GO" id="GO:0009253">
    <property type="term" value="P:peptidoglycan catabolic process"/>
    <property type="evidence" value="ECO:0007669"/>
    <property type="project" value="InterPro"/>
</dbReference>
<dbReference type="CDD" id="cd16900">
    <property type="entry name" value="endolysin_R21-like"/>
    <property type="match status" value="1"/>
</dbReference>
<dbReference type="Gene3D" id="1.10.530.40">
    <property type="match status" value="1"/>
</dbReference>
<dbReference type="HAMAP" id="MF_04110">
    <property type="entry name" value="ENDOLYSIN_T4"/>
    <property type="match status" value="1"/>
</dbReference>
<dbReference type="HAMAP" id="MF_04136">
    <property type="entry name" value="SAR_ENDOLYSIN"/>
    <property type="match status" value="1"/>
</dbReference>
<dbReference type="InterPro" id="IPR051018">
    <property type="entry name" value="Bacteriophage_GH24"/>
</dbReference>
<dbReference type="InterPro" id="IPR034690">
    <property type="entry name" value="Endolysin_T4_type"/>
</dbReference>
<dbReference type="InterPro" id="IPR002196">
    <property type="entry name" value="Glyco_hydro_24"/>
</dbReference>
<dbReference type="InterPro" id="IPR023346">
    <property type="entry name" value="Lysozyme-like_dom_sf"/>
</dbReference>
<dbReference type="InterPro" id="IPR023347">
    <property type="entry name" value="Lysozyme_dom_sf"/>
</dbReference>
<dbReference type="InterPro" id="IPR043688">
    <property type="entry name" value="SAR_endolysin-like"/>
</dbReference>
<dbReference type="PANTHER" id="PTHR38107">
    <property type="match status" value="1"/>
</dbReference>
<dbReference type="PANTHER" id="PTHR38107:SF3">
    <property type="entry name" value="LYSOZYME RRRD-RELATED"/>
    <property type="match status" value="1"/>
</dbReference>
<dbReference type="Pfam" id="PF00959">
    <property type="entry name" value="Phage_lysozyme"/>
    <property type="match status" value="1"/>
</dbReference>
<dbReference type="SUPFAM" id="SSF53955">
    <property type="entry name" value="Lysozyme-like"/>
    <property type="match status" value="1"/>
</dbReference>
<gene>
    <name type="primary">R</name>
    <name type="ordered locus">L0108</name>
</gene>
<keyword id="KW-0929">Antimicrobial</keyword>
<keyword id="KW-0081">Bacteriolytic enzyme</keyword>
<keyword id="KW-0204">Cytolysis</keyword>
<keyword id="KW-0326">Glycosidase</keyword>
<keyword id="KW-1030">Host cell inner membrane</keyword>
<keyword id="KW-0578">Host cell lysis by virus</keyword>
<keyword id="KW-1032">Host cell membrane</keyword>
<keyword id="KW-1043">Host membrane</keyword>
<keyword id="KW-0378">Hydrolase</keyword>
<keyword id="KW-0472">Membrane</keyword>
<keyword id="KW-1185">Reference proteome</keyword>
<keyword id="KW-0735">Signal-anchor</keyword>
<keyword id="KW-0812">Transmembrane</keyword>
<keyword id="KW-1133">Transmembrane helix</keyword>
<keyword id="KW-1188">Viral release from host cell</keyword>
<proteinExistence type="inferred from homology"/>
<reference key="1">
    <citation type="journal article" date="1999" name="J. Bacteriol.">
        <title>Sequence of Shiga toxin 2 phage 933W from Escherichia coli O157:H7: Shiga toxin as a phage late-gene product.</title>
        <authorList>
            <person name="Plunkett G. III"/>
            <person name="Rose D.J."/>
            <person name="Durfee T.J."/>
            <person name="Blattner F.R."/>
        </authorList>
    </citation>
    <scope>NUCLEOTIDE SEQUENCE [LARGE SCALE GENOMIC DNA]</scope>
</reference>
<name>ENLYS_BP933</name>
<accession>P68920</accession>
<accession>Q9T0Q1</accession>
<organismHost>
    <name type="scientific">Escherichia coli O157:H7</name>
    <dbReference type="NCBI Taxonomy" id="83334"/>
</organismHost>